<organism>
    <name type="scientific">Bacillus subtilis (strain 168)</name>
    <dbReference type="NCBI Taxonomy" id="224308"/>
    <lineage>
        <taxon>Bacteria</taxon>
        <taxon>Bacillati</taxon>
        <taxon>Bacillota</taxon>
        <taxon>Bacilli</taxon>
        <taxon>Bacillales</taxon>
        <taxon>Bacillaceae</taxon>
        <taxon>Bacillus</taxon>
    </lineage>
</organism>
<proteinExistence type="evidence at transcript level"/>
<protein>
    <recommendedName>
        <fullName>Protein CsbA</fullName>
    </recommendedName>
</protein>
<name>CSBA_BACSU</name>
<sequence>MITKAVFALFFPFMLVVLFTRVTFNHYVAIALTAALLFASYLKGYTETYFIVGLDVVSLVAGGLYMAKKAAEKKEE</sequence>
<evidence type="ECO:0000255" key="1"/>
<evidence type="ECO:0000305" key="2"/>
<comment type="subcellular location">
    <subcellularLocation>
        <location evidence="2">Cell membrane</location>
        <topology evidence="2">Multi-pass membrane protein</topology>
    </subcellularLocation>
</comment>
<comment type="developmental stage">
    <text>Maximally expressed in early stationary phase in medium containing glucose and glutamine.</text>
</comment>
<gene>
    <name type="primary">csbA</name>
    <name type="ordered locus">BSU35180</name>
</gene>
<feature type="chain" id="PRO_0000079391" description="Protein CsbA">
    <location>
        <begin position="1"/>
        <end position="76"/>
    </location>
</feature>
<feature type="topological domain" description="Extracellular" evidence="1">
    <location>
        <begin position="1"/>
        <end position="5"/>
    </location>
</feature>
<feature type="transmembrane region" description="Helical" evidence="1">
    <location>
        <begin position="6"/>
        <end position="22"/>
    </location>
</feature>
<feature type="topological domain" description="Cytoplasmic" evidence="1">
    <location>
        <begin position="23"/>
        <end position="27"/>
    </location>
</feature>
<feature type="transmembrane region" description="Helical" evidence="1">
    <location>
        <begin position="28"/>
        <end position="44"/>
    </location>
</feature>
<feature type="topological domain" description="Extracellular" evidence="1">
    <location>
        <begin position="45"/>
        <end position="49"/>
    </location>
</feature>
<feature type="transmembrane region" description="Helical" evidence="1">
    <location>
        <begin position="50"/>
        <end position="66"/>
    </location>
</feature>
<feature type="topological domain" description="Cytoplasmic" evidence="1">
    <location>
        <begin position="67"/>
        <end position="76"/>
    </location>
</feature>
<accession>P37953</accession>
<keyword id="KW-1003">Cell membrane</keyword>
<keyword id="KW-0472">Membrane</keyword>
<keyword id="KW-1185">Reference proteome</keyword>
<keyword id="KW-0812">Transmembrane</keyword>
<keyword id="KW-1133">Transmembrane helix</keyword>
<dbReference type="EMBL" id="M80473">
    <property type="protein sequence ID" value="AAA22359.1"/>
    <property type="molecule type" value="Genomic_DNA"/>
</dbReference>
<dbReference type="EMBL" id="M64048">
    <property type="protein sequence ID" value="AAA22388.1"/>
    <property type="molecule type" value="Genomic_DNA"/>
</dbReference>
<dbReference type="EMBL" id="AF017113">
    <property type="protein sequence ID" value="AAC67269.1"/>
    <property type="molecule type" value="Genomic_DNA"/>
</dbReference>
<dbReference type="EMBL" id="AL009126">
    <property type="protein sequence ID" value="CAB15535.1"/>
    <property type="molecule type" value="Genomic_DNA"/>
</dbReference>
<dbReference type="PIR" id="A37317">
    <property type="entry name" value="A37317"/>
</dbReference>
<dbReference type="RefSeq" id="NP_391398.1">
    <property type="nucleotide sequence ID" value="NC_000964.3"/>
</dbReference>
<dbReference type="RefSeq" id="WP_003228053.1">
    <property type="nucleotide sequence ID" value="NZ_OZ025638.1"/>
</dbReference>
<dbReference type="FunCoup" id="P37953">
    <property type="interactions" value="66"/>
</dbReference>
<dbReference type="STRING" id="224308.BSU35180"/>
<dbReference type="PaxDb" id="224308-BSU35180"/>
<dbReference type="EnsemblBacteria" id="CAB15535">
    <property type="protein sequence ID" value="CAB15535"/>
    <property type="gene ID" value="BSU_35180"/>
</dbReference>
<dbReference type="GeneID" id="936675"/>
<dbReference type="KEGG" id="bsu:BSU35180"/>
<dbReference type="PATRIC" id="fig|224308.179.peg.3808"/>
<dbReference type="eggNOG" id="COG4897">
    <property type="taxonomic scope" value="Bacteria"/>
</dbReference>
<dbReference type="InParanoid" id="P37953"/>
<dbReference type="OrthoDB" id="2454250at2"/>
<dbReference type="PhylomeDB" id="P37953"/>
<dbReference type="BioCyc" id="BSUB:BSU35180-MONOMER"/>
<dbReference type="PRO" id="PR:P37953"/>
<dbReference type="Proteomes" id="UP000001570">
    <property type="component" value="Chromosome"/>
</dbReference>
<dbReference type="GO" id="GO:0005886">
    <property type="term" value="C:plasma membrane"/>
    <property type="evidence" value="ECO:0007669"/>
    <property type="project" value="UniProtKB-SubCell"/>
</dbReference>
<dbReference type="InterPro" id="IPR019242">
    <property type="entry name" value="DUF2198"/>
</dbReference>
<dbReference type="Pfam" id="PF09964">
    <property type="entry name" value="DUF2198"/>
    <property type="match status" value="1"/>
</dbReference>
<reference key="1">
    <citation type="journal article" date="1991" name="J. Bacteriol.">
        <title>Genetic method to identify regulons controlled by nonessential elements: isolation of a gene dependent on alternate transcription factor sigma B of Bacillus subtilis.</title>
        <authorList>
            <person name="Boylan S.A."/>
            <person name="Thomas M.D."/>
            <person name="Price C.W."/>
        </authorList>
    </citation>
    <scope>NUCLEOTIDE SEQUENCE [GENOMIC DNA]</scope>
    <source>
        <strain>168 / Marburg / ATCC 6051 / DSM 10 / JCM 1465 / NBRC 13719 / NCIMB 3610 / NRRL NRS-744 / VKM B-501</strain>
    </source>
</reference>
<reference key="2">
    <citation type="journal article" date="1991" name="J. Bacteriol.">
        <title>Cloning and characterization of DNA damage-inducible promoter regions from Bacillus subtilis.</title>
        <authorList>
            <person name="Cheo D.L."/>
            <person name="Bayles K.W."/>
            <person name="Yasbin R.E."/>
        </authorList>
    </citation>
    <scope>NUCLEOTIDE SEQUENCE [GENOMIC DNA]</scope>
</reference>
<reference key="3">
    <citation type="submission" date="1997-11" db="EMBL/GenBank/DDBJ databases">
        <title>Nucleotide sequence of the 300-304 chromosomal segment of Bacillus subtilis.</title>
        <authorList>
            <person name="Lazarevic V."/>
            <person name="Soldo B."/>
            <person name="Rivolta C."/>
            <person name="Reynolds S."/>
            <person name="Mauel C."/>
            <person name="Karamata D."/>
        </authorList>
    </citation>
    <scope>NUCLEOTIDE SEQUENCE [GENOMIC DNA]</scope>
</reference>
<reference key="4">
    <citation type="journal article" date="1997" name="Nature">
        <title>The complete genome sequence of the Gram-positive bacterium Bacillus subtilis.</title>
        <authorList>
            <person name="Kunst F."/>
            <person name="Ogasawara N."/>
            <person name="Moszer I."/>
            <person name="Albertini A.M."/>
            <person name="Alloni G."/>
            <person name="Azevedo V."/>
            <person name="Bertero M.G."/>
            <person name="Bessieres P."/>
            <person name="Bolotin A."/>
            <person name="Borchert S."/>
            <person name="Borriss R."/>
            <person name="Boursier L."/>
            <person name="Brans A."/>
            <person name="Braun M."/>
            <person name="Brignell S.C."/>
            <person name="Bron S."/>
            <person name="Brouillet S."/>
            <person name="Bruschi C.V."/>
            <person name="Caldwell B."/>
            <person name="Capuano V."/>
            <person name="Carter N.M."/>
            <person name="Choi S.-K."/>
            <person name="Codani J.-J."/>
            <person name="Connerton I.F."/>
            <person name="Cummings N.J."/>
            <person name="Daniel R.A."/>
            <person name="Denizot F."/>
            <person name="Devine K.M."/>
            <person name="Duesterhoeft A."/>
            <person name="Ehrlich S.D."/>
            <person name="Emmerson P.T."/>
            <person name="Entian K.-D."/>
            <person name="Errington J."/>
            <person name="Fabret C."/>
            <person name="Ferrari E."/>
            <person name="Foulger D."/>
            <person name="Fritz C."/>
            <person name="Fujita M."/>
            <person name="Fujita Y."/>
            <person name="Fuma S."/>
            <person name="Galizzi A."/>
            <person name="Galleron N."/>
            <person name="Ghim S.-Y."/>
            <person name="Glaser P."/>
            <person name="Goffeau A."/>
            <person name="Golightly E.J."/>
            <person name="Grandi G."/>
            <person name="Guiseppi G."/>
            <person name="Guy B.J."/>
            <person name="Haga K."/>
            <person name="Haiech J."/>
            <person name="Harwood C.R."/>
            <person name="Henaut A."/>
            <person name="Hilbert H."/>
            <person name="Holsappel S."/>
            <person name="Hosono S."/>
            <person name="Hullo M.-F."/>
            <person name="Itaya M."/>
            <person name="Jones L.-M."/>
            <person name="Joris B."/>
            <person name="Karamata D."/>
            <person name="Kasahara Y."/>
            <person name="Klaerr-Blanchard M."/>
            <person name="Klein C."/>
            <person name="Kobayashi Y."/>
            <person name="Koetter P."/>
            <person name="Koningstein G."/>
            <person name="Krogh S."/>
            <person name="Kumano M."/>
            <person name="Kurita K."/>
            <person name="Lapidus A."/>
            <person name="Lardinois S."/>
            <person name="Lauber J."/>
            <person name="Lazarevic V."/>
            <person name="Lee S.-M."/>
            <person name="Levine A."/>
            <person name="Liu H."/>
            <person name="Masuda S."/>
            <person name="Mauel C."/>
            <person name="Medigue C."/>
            <person name="Medina N."/>
            <person name="Mellado R.P."/>
            <person name="Mizuno M."/>
            <person name="Moestl D."/>
            <person name="Nakai S."/>
            <person name="Noback M."/>
            <person name="Noone D."/>
            <person name="O'Reilly M."/>
            <person name="Ogawa K."/>
            <person name="Ogiwara A."/>
            <person name="Oudega B."/>
            <person name="Park S.-H."/>
            <person name="Parro V."/>
            <person name="Pohl T.M."/>
            <person name="Portetelle D."/>
            <person name="Porwollik S."/>
            <person name="Prescott A.M."/>
            <person name="Presecan E."/>
            <person name="Pujic P."/>
            <person name="Purnelle B."/>
            <person name="Rapoport G."/>
            <person name="Rey M."/>
            <person name="Reynolds S."/>
            <person name="Rieger M."/>
            <person name="Rivolta C."/>
            <person name="Rocha E."/>
            <person name="Roche B."/>
            <person name="Rose M."/>
            <person name="Sadaie Y."/>
            <person name="Sato T."/>
            <person name="Scanlan E."/>
            <person name="Schleich S."/>
            <person name="Schroeter R."/>
            <person name="Scoffone F."/>
            <person name="Sekiguchi J."/>
            <person name="Sekowska A."/>
            <person name="Seror S.J."/>
            <person name="Serror P."/>
            <person name="Shin B.-S."/>
            <person name="Soldo B."/>
            <person name="Sorokin A."/>
            <person name="Tacconi E."/>
            <person name="Takagi T."/>
            <person name="Takahashi H."/>
            <person name="Takemaru K."/>
            <person name="Takeuchi M."/>
            <person name="Tamakoshi A."/>
            <person name="Tanaka T."/>
            <person name="Terpstra P."/>
            <person name="Tognoni A."/>
            <person name="Tosato V."/>
            <person name="Uchiyama S."/>
            <person name="Vandenbol M."/>
            <person name="Vannier F."/>
            <person name="Vassarotti A."/>
            <person name="Viari A."/>
            <person name="Wambutt R."/>
            <person name="Wedler E."/>
            <person name="Wedler H."/>
            <person name="Weitzenegger T."/>
            <person name="Winters P."/>
            <person name="Wipat A."/>
            <person name="Yamamoto H."/>
            <person name="Yamane K."/>
            <person name="Yasumoto K."/>
            <person name="Yata K."/>
            <person name="Yoshida K."/>
            <person name="Yoshikawa H.-F."/>
            <person name="Zumstein E."/>
            <person name="Yoshikawa H."/>
            <person name="Danchin A."/>
        </authorList>
    </citation>
    <scope>NUCLEOTIDE SEQUENCE [LARGE SCALE GENOMIC DNA]</scope>
    <source>
        <strain>168</strain>
    </source>
</reference>